<accession>P50869</accession>
<sequence>MKNYFDSPFKGELLSEQVKNPNIKVGRYSYYSGYYHGHSFDECARYLHPDRDDVDKLIIGSFCSIGSGASFIMAGNQGHRHDWASSFPFFYMQEEPAFSSALDAFQRAGDTAIGNDVWIGSEAMIMPGIKIGDGAVIGSRSLVTKDVVPYAIIGGSPAKQIKKRFSDEEISLLMEMEWWNWPLDKIKTAMPLLCSSNIFGLHKYWREFVV</sequence>
<dbReference type="EC" id="2.3.1.28"/>
<dbReference type="EMBL" id="X82455">
    <property type="protein sequence ID" value="CAA57832.1"/>
    <property type="molecule type" value="Genomic_DNA"/>
</dbReference>
<dbReference type="PIR" id="S49577">
    <property type="entry name" value="S49577"/>
</dbReference>
<dbReference type="SMR" id="P50869"/>
<dbReference type="GO" id="GO:0008811">
    <property type="term" value="F:chloramphenicol O-acetyltransferase activity"/>
    <property type="evidence" value="ECO:0007669"/>
    <property type="project" value="UniProtKB-EC"/>
</dbReference>
<dbReference type="GO" id="GO:0046677">
    <property type="term" value="P:response to antibiotic"/>
    <property type="evidence" value="ECO:0007669"/>
    <property type="project" value="UniProtKB-KW"/>
</dbReference>
<dbReference type="CDD" id="cd03349">
    <property type="entry name" value="LbH_XAT"/>
    <property type="match status" value="1"/>
</dbReference>
<dbReference type="Gene3D" id="2.160.10.10">
    <property type="entry name" value="Hexapeptide repeat proteins"/>
    <property type="match status" value="1"/>
</dbReference>
<dbReference type="InterPro" id="IPR001451">
    <property type="entry name" value="Hexapep"/>
</dbReference>
<dbReference type="InterPro" id="IPR018357">
    <property type="entry name" value="Hexapep_transf_CS"/>
</dbReference>
<dbReference type="InterPro" id="IPR050179">
    <property type="entry name" value="Trans_hexapeptide_repeat"/>
</dbReference>
<dbReference type="InterPro" id="IPR011004">
    <property type="entry name" value="Trimer_LpxA-like_sf"/>
</dbReference>
<dbReference type="NCBIfam" id="NF000490">
    <property type="entry name" value="chloram_CatB"/>
    <property type="match status" value="1"/>
</dbReference>
<dbReference type="PANTHER" id="PTHR43300">
    <property type="entry name" value="ACETYLTRANSFERASE"/>
    <property type="match status" value="1"/>
</dbReference>
<dbReference type="PANTHER" id="PTHR43300:SF12">
    <property type="entry name" value="CHLORAMPHENICOL ACETYLTRANSFERASE"/>
    <property type="match status" value="1"/>
</dbReference>
<dbReference type="Pfam" id="PF00132">
    <property type="entry name" value="Hexapep"/>
    <property type="match status" value="1"/>
</dbReference>
<dbReference type="SUPFAM" id="SSF51161">
    <property type="entry name" value="Trimeric LpxA-like enzymes"/>
    <property type="match status" value="1"/>
</dbReference>
<dbReference type="PROSITE" id="PS00101">
    <property type="entry name" value="HEXAPEP_TRANSFERASES"/>
    <property type="match status" value="1"/>
</dbReference>
<gene>
    <name type="primary">cat</name>
</gene>
<name>CAT4_MORMO</name>
<reference key="1">
    <citation type="submission" date="1994-11" db="EMBL/GenBank/DDBJ databases">
        <authorList>
            <person name="Kupzig S."/>
            <person name="Bennett P.M."/>
        </authorList>
    </citation>
    <scope>NUCLEOTIDE SEQUENCE [GENOMIC DNA]</scope>
    <source>
        <strain>4H9</strain>
        <transposon>Tn840</transposon>
    </source>
</reference>
<comment type="function">
    <text>This enzyme is an effector of chloramphenicol resistance in bacteria.</text>
</comment>
<comment type="catalytic activity">
    <reaction>
        <text>chloramphenicol + acetyl-CoA = chloramphenicol 3-acetate + CoA</text>
        <dbReference type="Rhea" id="RHEA:18421"/>
        <dbReference type="ChEBI" id="CHEBI:16730"/>
        <dbReference type="ChEBI" id="CHEBI:17698"/>
        <dbReference type="ChEBI" id="CHEBI:57287"/>
        <dbReference type="ChEBI" id="CHEBI:57288"/>
        <dbReference type="EC" id="2.3.1.28"/>
    </reaction>
</comment>
<comment type="similarity">
    <text evidence="2">Belongs to the transferase hexapeptide repeat family.</text>
</comment>
<proteinExistence type="inferred from homology"/>
<keyword id="KW-0012">Acyltransferase</keyword>
<keyword id="KW-0046">Antibiotic resistance</keyword>
<keyword id="KW-0677">Repeat</keyword>
<keyword id="KW-0808">Transferase</keyword>
<keyword id="KW-0814">Transposable element</keyword>
<organism>
    <name type="scientific">Morganella morganii</name>
    <name type="common">Proteus morganii</name>
    <dbReference type="NCBI Taxonomy" id="582"/>
    <lineage>
        <taxon>Bacteria</taxon>
        <taxon>Pseudomonadati</taxon>
        <taxon>Pseudomonadota</taxon>
        <taxon>Gammaproteobacteria</taxon>
        <taxon>Enterobacterales</taxon>
        <taxon>Morganellaceae</taxon>
        <taxon>Morganella</taxon>
    </lineage>
</organism>
<protein>
    <recommendedName>
        <fullName>Chloramphenicol acetyltransferase</fullName>
        <ecNumber>2.3.1.28</ecNumber>
    </recommendedName>
</protein>
<evidence type="ECO:0000250" key="1"/>
<evidence type="ECO:0000305" key="2"/>
<feature type="chain" id="PRO_0000068660" description="Chloramphenicol acetyltransferase">
    <location>
        <begin position="1"/>
        <end position="210"/>
    </location>
</feature>
<feature type="active site" evidence="1">
    <location>
        <position position="79"/>
    </location>
</feature>